<evidence type="ECO:0000250" key="1"/>
<evidence type="ECO:0000250" key="2">
    <source>
        <dbReference type="UniProtKB" id="Q5PRF9"/>
    </source>
</evidence>
<evidence type="ECO:0000256" key="3">
    <source>
        <dbReference type="SAM" id="MobiDB-lite"/>
    </source>
</evidence>
<evidence type="ECO:0000305" key="4"/>
<evidence type="ECO:0007744" key="5">
    <source>
    </source>
</evidence>
<evidence type="ECO:0007744" key="6">
    <source>
    </source>
</evidence>
<reference key="1">
    <citation type="journal article" date="2004" name="Genome Res.">
        <title>The status, quality, and expansion of the NIH full-length cDNA project: the Mammalian Gene Collection (MGC).</title>
        <authorList>
            <consortium name="The MGC Project Team"/>
        </authorList>
    </citation>
    <scope>NUCLEOTIDE SEQUENCE [LARGE SCALE MRNA]</scope>
    <source>
        <strain>FVB/N</strain>
        <tissue>Liver</tissue>
    </source>
</reference>
<reference key="2">
    <citation type="journal article" date="2009" name="Immunity">
        <title>The phagosomal proteome in interferon-gamma-activated macrophages.</title>
        <authorList>
            <person name="Trost M."/>
            <person name="English L."/>
            <person name="Lemieux S."/>
            <person name="Courcelles M."/>
            <person name="Desjardins M."/>
            <person name="Thibault P."/>
        </authorList>
    </citation>
    <scope>IDENTIFICATION BY MASS SPECTROMETRY [LARGE SCALE ANALYSIS]</scope>
</reference>
<reference key="3">
    <citation type="journal article" date="2010" name="Cell">
        <title>A tissue-specific atlas of mouse protein phosphorylation and expression.</title>
        <authorList>
            <person name="Huttlin E.L."/>
            <person name="Jedrychowski M.P."/>
            <person name="Elias J.E."/>
            <person name="Goswami T."/>
            <person name="Rad R."/>
            <person name="Beausoleil S.A."/>
            <person name="Villen J."/>
            <person name="Haas W."/>
            <person name="Sowa M.E."/>
            <person name="Gygi S.P."/>
        </authorList>
    </citation>
    <scope>PHOSPHORYLATION [LARGE SCALE ANALYSIS] AT SER-172; SER-271; SER-278; SER-279 AND SER-281</scope>
    <scope>IDENTIFICATION BY MASS SPECTROMETRY [LARGE SCALE ANALYSIS]</scope>
    <source>
        <tissue>Brain</tissue>
        <tissue>Kidney</tissue>
        <tissue>Lung</tissue>
        <tissue>Pancreas</tissue>
        <tissue>Testis</tissue>
    </source>
</reference>
<reference key="4">
    <citation type="journal article" date="2014" name="Mol. Cell. Proteomics">
        <title>Immunoaffinity enrichment and mass spectrometry analysis of protein methylation.</title>
        <authorList>
            <person name="Guo A."/>
            <person name="Gu H."/>
            <person name="Zhou J."/>
            <person name="Mulhern D."/>
            <person name="Wang Y."/>
            <person name="Lee K.A."/>
            <person name="Yang V."/>
            <person name="Aguiar M."/>
            <person name="Kornhauser J."/>
            <person name="Jia X."/>
            <person name="Ren J."/>
            <person name="Beausoleil S.A."/>
            <person name="Silva J.C."/>
            <person name="Vemulapalli V."/>
            <person name="Bedford M.T."/>
            <person name="Comb M.J."/>
        </authorList>
    </citation>
    <scope>METHYLATION [LARGE SCALE ANALYSIS] AT ARG-595</scope>
    <scope>IDENTIFICATION BY MASS SPECTROMETRY [LARGE SCALE ANALYSIS]</scope>
    <source>
        <tissue>Brain</tissue>
        <tissue>Embryo</tissue>
    </source>
</reference>
<keyword id="KW-0963">Cytoplasm</keyword>
<keyword id="KW-0488">Methylation</keyword>
<keyword id="KW-0539">Nucleus</keyword>
<keyword id="KW-0597">Phosphoprotein</keyword>
<keyword id="KW-1185">Reference proteome</keyword>
<keyword id="KW-0678">Repressor</keyword>
<keyword id="KW-0804">Transcription</keyword>
<keyword id="KW-0805">Transcription regulation</keyword>
<accession>Q80XS6</accession>
<proteinExistence type="evidence at protein level"/>
<feature type="chain" id="PRO_0000260081" description="Protein Smaug homolog 2">
    <location>
        <begin position="1"/>
        <end position="687"/>
    </location>
</feature>
<feature type="domain" description="SAM">
    <location>
        <begin position="299"/>
        <end position="372"/>
    </location>
</feature>
<feature type="region of interest" description="Disordered" evidence="3">
    <location>
        <begin position="160"/>
        <end position="301"/>
    </location>
</feature>
<feature type="region of interest" description="Disordered" evidence="3">
    <location>
        <begin position="402"/>
        <end position="464"/>
    </location>
</feature>
<feature type="region of interest" description="Disordered" evidence="3">
    <location>
        <begin position="600"/>
        <end position="636"/>
    </location>
</feature>
<feature type="compositionally biased region" description="Basic and acidic residues" evidence="3">
    <location>
        <begin position="160"/>
        <end position="172"/>
    </location>
</feature>
<feature type="compositionally biased region" description="Low complexity" evidence="3">
    <location>
        <begin position="175"/>
        <end position="190"/>
    </location>
</feature>
<feature type="compositionally biased region" description="Low complexity" evidence="3">
    <location>
        <begin position="200"/>
        <end position="211"/>
    </location>
</feature>
<feature type="compositionally biased region" description="Polar residues" evidence="3">
    <location>
        <begin position="215"/>
        <end position="224"/>
    </location>
</feature>
<feature type="compositionally biased region" description="Low complexity" evidence="3">
    <location>
        <begin position="278"/>
        <end position="290"/>
    </location>
</feature>
<feature type="compositionally biased region" description="Basic and acidic residues" evidence="3">
    <location>
        <begin position="424"/>
        <end position="435"/>
    </location>
</feature>
<feature type="compositionally biased region" description="Low complexity" evidence="3">
    <location>
        <begin position="448"/>
        <end position="461"/>
    </location>
</feature>
<feature type="compositionally biased region" description="Polar residues" evidence="3">
    <location>
        <begin position="617"/>
        <end position="636"/>
    </location>
</feature>
<feature type="modified residue" description="Phosphoserine" evidence="5">
    <location>
        <position position="172"/>
    </location>
</feature>
<feature type="modified residue" description="Phosphoserine" evidence="5">
    <location>
        <position position="271"/>
    </location>
</feature>
<feature type="modified residue" description="Phosphoserine" evidence="5">
    <location>
        <position position="278"/>
    </location>
</feature>
<feature type="modified residue" description="Phosphoserine" evidence="5">
    <location>
        <position position="279"/>
    </location>
</feature>
<feature type="modified residue" description="Phosphoserine" evidence="5">
    <location>
        <position position="281"/>
    </location>
</feature>
<feature type="modified residue" description="Phosphothreonine" evidence="2">
    <location>
        <position position="400"/>
    </location>
</feature>
<feature type="modified residue" description="Phosphoserine" evidence="2">
    <location>
        <position position="548"/>
    </location>
</feature>
<feature type="modified residue" description="Phosphoserine" evidence="2">
    <location>
        <position position="550"/>
    </location>
</feature>
<feature type="modified residue" description="Phosphoserine" evidence="2">
    <location>
        <position position="556"/>
    </location>
</feature>
<feature type="modified residue" description="Phosphoserine" evidence="2">
    <location>
        <position position="585"/>
    </location>
</feature>
<feature type="modified residue" description="Phosphoserine" evidence="2">
    <location>
        <position position="593"/>
    </location>
</feature>
<feature type="modified residue" description="Asymmetric dimethylarginine" evidence="6">
    <location>
        <position position="595"/>
    </location>
</feature>
<feature type="modified residue" description="Phosphoserine" evidence="2">
    <location>
        <position position="621"/>
    </location>
</feature>
<name>SMAG2_MOUSE</name>
<sequence length="687" mass="75024">MMFRDQVGILASWFKGWNECEQTVALLSLLKRVTRTQARFLQLCLEHSLADCNDIHLLESEANSAAIVSQWQQESKEKVVSLLLSHLPLLQPGNTEAKSEYMRLLQKVLAYSIESNAFIEESRQLLSYALIHPATTLEDRNALALWLSHLEERLASGFRTRPEPSYHSRQGSDEWGGPAELAPGEAGPGWQDKPPRENGHVPFHPSSSVPPAINSIGSNANTGLPCQIHPSPLKRSMSLIPTSPQAPGEWPSPEELGARAAFTTPDHAPLSPQSSVASSGSEQTEEQGSSRNTFQEDGSGMKDVPSWLKSLRLHKYAALFSQMSYEEMMTLTEQHLESQNVTKGARHKIALSIQKLRERQSVLKSLEKDVLEGGNLWNALQELQQIIITPIKAYSVLQATPTAKDEGRGEPLLPGAEPPLTHPGSDKGTEAKDPPAAENYPPPPAPAPSDSSEPAPAPVADGDIPSQFTRVMGKVCTQLLVSRPDEENITSYLQLIEKCLTHEAFTETQKKRLLSWKQQVLKLLRTFPRKAALDMQSYRQQKGWAFGSNSLPIAGSVGMGVARRTQRQFPMPPRALPPGRMGLLSPSGIGGVSPRHALTSPSLGGQGRQNLWFANPGGSNSMPSQSRSSVQRTHSLPVHSSPQAILMFPPDCPVPGPDLEINPTLESLCLSMTEHALGDGTDKTSTI</sequence>
<protein>
    <recommendedName>
        <fullName>Protein Smaug homolog 2</fullName>
        <shortName>Smaug 2</shortName>
        <shortName>mSmaug2</shortName>
    </recommendedName>
    <alternativeName>
        <fullName>Sterile alpha motif domain-containing protein 4B</fullName>
    </alternativeName>
</protein>
<comment type="function">
    <text evidence="1">Has transcriptional repressor activity. Overexpression inhibits the transcriptional activities of AP-1, p53/TP53 and CDKN1A (By similarity).</text>
</comment>
<comment type="subcellular location">
    <subcellularLocation>
        <location evidence="1">Cytoplasm</location>
    </subcellularLocation>
    <subcellularLocation>
        <location evidence="1">Nucleus</location>
    </subcellularLocation>
</comment>
<comment type="similarity">
    <text evidence="4">Belongs to the SMAUG family.</text>
</comment>
<gene>
    <name type="primary">Samd4b</name>
    <name type="synonym">Smaug2</name>
</gene>
<dbReference type="EMBL" id="BC042901">
    <property type="protein sequence ID" value="AAH42901.1"/>
    <property type="molecule type" value="mRNA"/>
</dbReference>
<dbReference type="CCDS" id="CCDS21044.1"/>
<dbReference type="SMR" id="Q80XS6"/>
<dbReference type="FunCoup" id="Q80XS6">
    <property type="interactions" value="1583"/>
</dbReference>
<dbReference type="STRING" id="10090.ENSMUSP00000147037"/>
<dbReference type="iPTMnet" id="Q80XS6"/>
<dbReference type="PhosphoSitePlus" id="Q80XS6"/>
<dbReference type="jPOST" id="Q80XS6"/>
<dbReference type="PaxDb" id="10090-ENSMUSP00000040486"/>
<dbReference type="PeptideAtlas" id="Q80XS6"/>
<dbReference type="ProteomicsDB" id="257519"/>
<dbReference type="Pumba" id="Q80XS6"/>
<dbReference type="AGR" id="MGI:2448542"/>
<dbReference type="MGI" id="MGI:2448542">
    <property type="gene designation" value="Samd4b"/>
</dbReference>
<dbReference type="eggNOG" id="KOG3791">
    <property type="taxonomic scope" value="Eukaryota"/>
</dbReference>
<dbReference type="InParanoid" id="Q80XS6"/>
<dbReference type="PhylomeDB" id="Q80XS6"/>
<dbReference type="ChiTaRS" id="Samd4b">
    <property type="organism name" value="mouse"/>
</dbReference>
<dbReference type="PRO" id="PR:Q80XS6"/>
<dbReference type="Proteomes" id="UP000000589">
    <property type="component" value="Unplaced"/>
</dbReference>
<dbReference type="RNAct" id="Q80XS6">
    <property type="molecule type" value="protein"/>
</dbReference>
<dbReference type="GO" id="GO:0005737">
    <property type="term" value="C:cytoplasm"/>
    <property type="evidence" value="ECO:0007669"/>
    <property type="project" value="UniProtKB-SubCell"/>
</dbReference>
<dbReference type="GO" id="GO:0005634">
    <property type="term" value="C:nucleus"/>
    <property type="evidence" value="ECO:0007669"/>
    <property type="project" value="UniProtKB-SubCell"/>
</dbReference>
<dbReference type="GO" id="GO:0003729">
    <property type="term" value="F:mRNA binding"/>
    <property type="evidence" value="ECO:0000314"/>
    <property type="project" value="MGI"/>
</dbReference>
<dbReference type="GO" id="GO:0030371">
    <property type="term" value="F:translation repressor activity"/>
    <property type="evidence" value="ECO:0007669"/>
    <property type="project" value="InterPro"/>
</dbReference>
<dbReference type="GO" id="GO:0098749">
    <property type="term" value="P:cerebellar neuron development"/>
    <property type="evidence" value="ECO:0000315"/>
    <property type="project" value="MGI"/>
</dbReference>
<dbReference type="GO" id="GO:0043488">
    <property type="term" value="P:regulation of mRNA stability"/>
    <property type="evidence" value="ECO:0007669"/>
    <property type="project" value="InterPro"/>
</dbReference>
<dbReference type="CDD" id="cd09557">
    <property type="entry name" value="SAM_Smaug"/>
    <property type="match status" value="1"/>
</dbReference>
<dbReference type="FunFam" id="1.10.150.50:FF:000013">
    <property type="entry name" value="Protein Smaug homolog 1 isoform 2"/>
    <property type="match status" value="1"/>
</dbReference>
<dbReference type="FunFam" id="1.25.40.170:FF:000001">
    <property type="entry name" value="Protein Smaug homolog 1 isoform 2"/>
    <property type="match status" value="1"/>
</dbReference>
<dbReference type="FunFam" id="1.25.40.170:FF:000002">
    <property type="entry name" value="Protein Smaug homolog 1 isoform 2"/>
    <property type="match status" value="1"/>
</dbReference>
<dbReference type="Gene3D" id="1.25.40.170">
    <property type="entry name" value="Smaug, PHAT domain"/>
    <property type="match status" value="2"/>
</dbReference>
<dbReference type="Gene3D" id="1.10.150.50">
    <property type="entry name" value="Transcription Factor, Ets-1"/>
    <property type="match status" value="1"/>
</dbReference>
<dbReference type="InterPro" id="IPR037093">
    <property type="entry name" value="PHAT_dom_sf"/>
</dbReference>
<dbReference type="InterPro" id="IPR001660">
    <property type="entry name" value="SAM"/>
</dbReference>
<dbReference type="InterPro" id="IPR013761">
    <property type="entry name" value="SAM/pointed_sf"/>
</dbReference>
<dbReference type="InterPro" id="IPR050897">
    <property type="entry name" value="SMAUG/VTS1_RNA-bind"/>
</dbReference>
<dbReference type="InterPro" id="IPR037634">
    <property type="entry name" value="Smaug_SAM"/>
</dbReference>
<dbReference type="PANTHER" id="PTHR12515:SF9">
    <property type="entry name" value="PROTEIN SMAUG HOMOLOG 2"/>
    <property type="match status" value="1"/>
</dbReference>
<dbReference type="PANTHER" id="PTHR12515">
    <property type="entry name" value="STERILE ALPHA MOTIF DOMAIN CONTAINING PROTEIN 4-RELATED"/>
    <property type="match status" value="1"/>
</dbReference>
<dbReference type="Pfam" id="PF00536">
    <property type="entry name" value="SAM_1"/>
    <property type="match status" value="1"/>
</dbReference>
<dbReference type="SMART" id="SM00454">
    <property type="entry name" value="SAM"/>
    <property type="match status" value="1"/>
</dbReference>
<dbReference type="SUPFAM" id="SSF47769">
    <property type="entry name" value="SAM/Pointed domain"/>
    <property type="match status" value="1"/>
</dbReference>
<organism>
    <name type="scientific">Mus musculus</name>
    <name type="common">Mouse</name>
    <dbReference type="NCBI Taxonomy" id="10090"/>
    <lineage>
        <taxon>Eukaryota</taxon>
        <taxon>Metazoa</taxon>
        <taxon>Chordata</taxon>
        <taxon>Craniata</taxon>
        <taxon>Vertebrata</taxon>
        <taxon>Euteleostomi</taxon>
        <taxon>Mammalia</taxon>
        <taxon>Eutheria</taxon>
        <taxon>Euarchontoglires</taxon>
        <taxon>Glires</taxon>
        <taxon>Rodentia</taxon>
        <taxon>Myomorpha</taxon>
        <taxon>Muroidea</taxon>
        <taxon>Muridae</taxon>
        <taxon>Murinae</taxon>
        <taxon>Mus</taxon>
        <taxon>Mus</taxon>
    </lineage>
</organism>